<reference key="1">
    <citation type="journal article" date="1992" name="J. Exp. Med.">
        <title>Immunoglobulin E plus antigen challenge induces a novel intercrine/chemokine in mouse mast cells.</title>
        <authorList>
            <person name="Kulmburg P.A."/>
            <person name="Huber N.E."/>
            <person name="Scheer B.J."/>
            <person name="Wrann M."/>
            <person name="Baumruker T."/>
        </authorList>
    </citation>
    <scope>NUCLEOTIDE SEQUENCE [MRNA]</scope>
    <source>
        <tissue>Mast cell</tissue>
    </source>
</reference>
<reference key="2">
    <citation type="journal article" date="1994" name="Biochem. Biophys. Res. Commun.">
        <title>Mouse macrophage derived monocyte chemotactic protein-3: cDNA cloning and identification as MARC/FIC.</title>
        <authorList>
            <person name="Thirion S."/>
            <person name="Nys G."/>
            <person name="Fiten P."/>
            <person name="Masure S."/>
            <person name="van Damme J."/>
            <person name="Opdenakker G."/>
        </authorList>
    </citation>
    <scope>NUCLEOTIDE SEQUENCE [MRNA]</scope>
</reference>
<reference key="3">
    <citation type="submission" date="1992-06" db="EMBL/GenBank/DDBJ databases">
        <authorList>
            <person name="Werner F."/>
        </authorList>
    </citation>
    <scope>NUCLEOTIDE SEQUENCE</scope>
</reference>
<reference key="4">
    <citation type="journal article" date="1993" name="Mol. Cell. Biol.">
        <title>The product of a novel growth factor-activated gene, fic, is a biologically active 'C-C'-type cytokine.</title>
        <authorList>
            <person name="Heinrich J.N."/>
            <person name="Ryseck R.P."/>
            <person name="Macdonald-Bravo H."/>
            <person name="Bravo R."/>
        </authorList>
    </citation>
    <scope>NUCLEOTIDE SEQUENCE [MRNA]</scope>
</reference>
<reference key="5">
    <citation type="journal article" date="1994" name="J. Immunol.">
        <title>A transcription factor with AP3-like binding specificity mediates gene regulation after an allergic triggering with IgE and Ag in mouse mast cells.</title>
        <authorList>
            <person name="Jarmin D.I."/>
            <person name="Kulmburg P.A."/>
            <person name="Huber N.E."/>
            <person name="Baumann G."/>
            <person name="Prieschl-Strassmayr E.E."/>
            <person name="Baumruker T."/>
        </authorList>
    </citation>
    <scope>NUCLEOTIDE SEQUENCE [GENOMIC DNA]</scope>
</reference>
<reference key="6">
    <citation type="journal article" date="1999" name="J. Immunol.">
        <title>Sequence polymorphisms in the chemokines Scya1 (TCA-3), Scya2 (monocyte chemoattractant protein (MCP)-1), and Scya12 (MCP-5) are candidates for eae7, a locus controlling susceptibility to monophasic remitting/nonrelapsing experimental allergic encephalomyelitis.</title>
        <authorList>
            <person name="Teuscher C."/>
            <person name="Butterfield R.J."/>
            <person name="Ma R.Z."/>
            <person name="Zachary J.F."/>
            <person name="Doerge R.W."/>
            <person name="Blankenhorn E.P."/>
        </authorList>
    </citation>
    <scope>NUCLEOTIDE SEQUENCE</scope>
    <source>
        <strain>B10.S/J</strain>
        <strain>SJL/J</strain>
        <tissue>Spleen</tissue>
    </source>
</reference>
<reference key="7">
    <citation type="journal article" date="2005" name="Science">
        <title>The transcriptional landscape of the mammalian genome.</title>
        <authorList>
            <person name="Carninci P."/>
            <person name="Kasukawa T."/>
            <person name="Katayama S."/>
            <person name="Gough J."/>
            <person name="Frith M.C."/>
            <person name="Maeda N."/>
            <person name="Oyama R."/>
            <person name="Ravasi T."/>
            <person name="Lenhard B."/>
            <person name="Wells C."/>
            <person name="Kodzius R."/>
            <person name="Shimokawa K."/>
            <person name="Bajic V.B."/>
            <person name="Brenner S.E."/>
            <person name="Batalov S."/>
            <person name="Forrest A.R."/>
            <person name="Zavolan M."/>
            <person name="Davis M.J."/>
            <person name="Wilming L.G."/>
            <person name="Aidinis V."/>
            <person name="Allen J.E."/>
            <person name="Ambesi-Impiombato A."/>
            <person name="Apweiler R."/>
            <person name="Aturaliya R.N."/>
            <person name="Bailey T.L."/>
            <person name="Bansal M."/>
            <person name="Baxter L."/>
            <person name="Beisel K.W."/>
            <person name="Bersano T."/>
            <person name="Bono H."/>
            <person name="Chalk A.M."/>
            <person name="Chiu K.P."/>
            <person name="Choudhary V."/>
            <person name="Christoffels A."/>
            <person name="Clutterbuck D.R."/>
            <person name="Crowe M.L."/>
            <person name="Dalla E."/>
            <person name="Dalrymple B.P."/>
            <person name="de Bono B."/>
            <person name="Della Gatta G."/>
            <person name="di Bernardo D."/>
            <person name="Down T."/>
            <person name="Engstrom P."/>
            <person name="Fagiolini M."/>
            <person name="Faulkner G."/>
            <person name="Fletcher C.F."/>
            <person name="Fukushima T."/>
            <person name="Furuno M."/>
            <person name="Futaki S."/>
            <person name="Gariboldi M."/>
            <person name="Georgii-Hemming P."/>
            <person name="Gingeras T.R."/>
            <person name="Gojobori T."/>
            <person name="Green R.E."/>
            <person name="Gustincich S."/>
            <person name="Harbers M."/>
            <person name="Hayashi Y."/>
            <person name="Hensch T.K."/>
            <person name="Hirokawa N."/>
            <person name="Hill D."/>
            <person name="Huminiecki L."/>
            <person name="Iacono M."/>
            <person name="Ikeo K."/>
            <person name="Iwama A."/>
            <person name="Ishikawa T."/>
            <person name="Jakt M."/>
            <person name="Kanapin A."/>
            <person name="Katoh M."/>
            <person name="Kawasawa Y."/>
            <person name="Kelso J."/>
            <person name="Kitamura H."/>
            <person name="Kitano H."/>
            <person name="Kollias G."/>
            <person name="Krishnan S.P."/>
            <person name="Kruger A."/>
            <person name="Kummerfeld S.K."/>
            <person name="Kurochkin I.V."/>
            <person name="Lareau L.F."/>
            <person name="Lazarevic D."/>
            <person name="Lipovich L."/>
            <person name="Liu J."/>
            <person name="Liuni S."/>
            <person name="McWilliam S."/>
            <person name="Madan Babu M."/>
            <person name="Madera M."/>
            <person name="Marchionni L."/>
            <person name="Matsuda H."/>
            <person name="Matsuzawa S."/>
            <person name="Miki H."/>
            <person name="Mignone F."/>
            <person name="Miyake S."/>
            <person name="Morris K."/>
            <person name="Mottagui-Tabar S."/>
            <person name="Mulder N."/>
            <person name="Nakano N."/>
            <person name="Nakauchi H."/>
            <person name="Ng P."/>
            <person name="Nilsson R."/>
            <person name="Nishiguchi S."/>
            <person name="Nishikawa S."/>
            <person name="Nori F."/>
            <person name="Ohara O."/>
            <person name="Okazaki Y."/>
            <person name="Orlando V."/>
            <person name="Pang K.C."/>
            <person name="Pavan W.J."/>
            <person name="Pavesi G."/>
            <person name="Pesole G."/>
            <person name="Petrovsky N."/>
            <person name="Piazza S."/>
            <person name="Reed J."/>
            <person name="Reid J.F."/>
            <person name="Ring B.Z."/>
            <person name="Ringwald M."/>
            <person name="Rost B."/>
            <person name="Ruan Y."/>
            <person name="Salzberg S.L."/>
            <person name="Sandelin A."/>
            <person name="Schneider C."/>
            <person name="Schoenbach C."/>
            <person name="Sekiguchi K."/>
            <person name="Semple C.A."/>
            <person name="Seno S."/>
            <person name="Sessa L."/>
            <person name="Sheng Y."/>
            <person name="Shibata Y."/>
            <person name="Shimada H."/>
            <person name="Shimada K."/>
            <person name="Silva D."/>
            <person name="Sinclair B."/>
            <person name="Sperling S."/>
            <person name="Stupka E."/>
            <person name="Sugiura K."/>
            <person name="Sultana R."/>
            <person name="Takenaka Y."/>
            <person name="Taki K."/>
            <person name="Tammoja K."/>
            <person name="Tan S.L."/>
            <person name="Tang S."/>
            <person name="Taylor M.S."/>
            <person name="Tegner J."/>
            <person name="Teichmann S.A."/>
            <person name="Ueda H.R."/>
            <person name="van Nimwegen E."/>
            <person name="Verardo R."/>
            <person name="Wei C.L."/>
            <person name="Yagi K."/>
            <person name="Yamanishi H."/>
            <person name="Zabarovsky E."/>
            <person name="Zhu S."/>
            <person name="Zimmer A."/>
            <person name="Hide W."/>
            <person name="Bult C."/>
            <person name="Grimmond S.M."/>
            <person name="Teasdale R.D."/>
            <person name="Liu E.T."/>
            <person name="Brusic V."/>
            <person name="Quackenbush J."/>
            <person name="Wahlestedt C."/>
            <person name="Mattick J.S."/>
            <person name="Hume D.A."/>
            <person name="Kai C."/>
            <person name="Sasaki D."/>
            <person name="Tomaru Y."/>
            <person name="Fukuda S."/>
            <person name="Kanamori-Katayama M."/>
            <person name="Suzuki M."/>
            <person name="Aoki J."/>
            <person name="Arakawa T."/>
            <person name="Iida J."/>
            <person name="Imamura K."/>
            <person name="Itoh M."/>
            <person name="Kato T."/>
            <person name="Kawaji H."/>
            <person name="Kawagashira N."/>
            <person name="Kawashima T."/>
            <person name="Kojima M."/>
            <person name="Kondo S."/>
            <person name="Konno H."/>
            <person name="Nakano K."/>
            <person name="Ninomiya N."/>
            <person name="Nishio T."/>
            <person name="Okada M."/>
            <person name="Plessy C."/>
            <person name="Shibata K."/>
            <person name="Shiraki T."/>
            <person name="Suzuki S."/>
            <person name="Tagami M."/>
            <person name="Waki K."/>
            <person name="Watahiki A."/>
            <person name="Okamura-Oho Y."/>
            <person name="Suzuki H."/>
            <person name="Kawai J."/>
            <person name="Hayashizaki Y."/>
        </authorList>
    </citation>
    <scope>NUCLEOTIDE SEQUENCE [LARGE SCALE MRNA]</scope>
    <source>
        <strain>C57BL/6J</strain>
        <tissue>Pancreas</tissue>
    </source>
</reference>
<reference key="8">
    <citation type="journal article" date="2004" name="Genome Res.">
        <title>The status, quality, and expansion of the NIH full-length cDNA project: the Mammalian Gene Collection (MGC).</title>
        <authorList>
            <consortium name="The MGC Project Team"/>
        </authorList>
    </citation>
    <scope>NUCLEOTIDE SEQUENCE [LARGE SCALE MRNA]</scope>
    <source>
        <tissue>Testis</tissue>
    </source>
</reference>
<evidence type="ECO:0000250" key="1"/>
<evidence type="ECO:0000250" key="2">
    <source>
        <dbReference type="UniProtKB" id="P80098"/>
    </source>
</evidence>
<evidence type="ECO:0000255" key="3"/>
<evidence type="ECO:0000305" key="4"/>
<gene>
    <name type="primary">Ccl7</name>
    <name type="synonym">Fic</name>
    <name type="synonym">Mcp3</name>
    <name type="synonym">Scya7</name>
</gene>
<comment type="function">
    <text evidence="1">Chemotactic factor that attracts monocytes and eosinophils, but not neutrophils. Augments monocyte anti-tumor activity (By similarity).</text>
</comment>
<comment type="subunit">
    <text evidence="2">Monomer. Interacts with TNFAIP6 (via Link domain).</text>
</comment>
<comment type="subcellular location">
    <subcellularLocation>
        <location>Secreted</location>
    </subcellularLocation>
</comment>
<comment type="similarity">
    <text evidence="4">Belongs to the intercrine beta (chemokine CC) family.</text>
</comment>
<accession>Q03366</accession>
<keyword id="KW-0145">Chemotaxis</keyword>
<keyword id="KW-0202">Cytokine</keyword>
<keyword id="KW-1015">Disulfide bond</keyword>
<keyword id="KW-0325">Glycoprotein</keyword>
<keyword id="KW-0358">Heparin-binding</keyword>
<keyword id="KW-0395">Inflammatory response</keyword>
<keyword id="KW-0873">Pyrrolidone carboxylic acid</keyword>
<keyword id="KW-1185">Reference proteome</keyword>
<keyword id="KW-0964">Secreted</keyword>
<keyword id="KW-0732">Signal</keyword>
<protein>
    <recommendedName>
        <fullName>C-C motif chemokine 7</fullName>
    </recommendedName>
    <alternativeName>
        <fullName>Intercrine/chemokine MARC</fullName>
    </alternativeName>
    <alternativeName>
        <fullName>Monocyte chemoattractant protein 3</fullName>
    </alternativeName>
    <alternativeName>
        <fullName>Monocyte chemotactic protein 3</fullName>
        <shortName>MCP-3</shortName>
    </alternativeName>
    <alternativeName>
        <fullName>Protein FIC</fullName>
    </alternativeName>
    <alternativeName>
        <fullName>Small-inducible cytokine A7</fullName>
    </alternativeName>
</protein>
<sequence>MRISATLLCLLLIAAAFSIQVWAQPDGPNASTCCYVKKQKIPKRNLKSYRRITSSRCPWEAVIFKTKKGMEVCAEAHQKWVEEAIAYLDMKTPTPKP</sequence>
<feature type="signal peptide" evidence="3">
    <location>
        <begin position="1"/>
        <end position="23"/>
    </location>
</feature>
<feature type="chain" id="PRO_0000005184" description="C-C motif chemokine 7">
    <location>
        <begin position="24"/>
        <end position="97"/>
    </location>
</feature>
<feature type="modified residue" description="Pyrrolidone carboxylic acid" evidence="2">
    <location>
        <position position="24"/>
    </location>
</feature>
<feature type="glycosylation site" description="N-linked (GlcNAc...) asparagine" evidence="3">
    <location>
        <position position="29"/>
    </location>
</feature>
<feature type="disulfide bond" evidence="1">
    <location>
        <begin position="33"/>
        <end position="57"/>
    </location>
</feature>
<feature type="disulfide bond" evidence="1">
    <location>
        <begin position="34"/>
        <end position="73"/>
    </location>
</feature>
<feature type="sequence conflict" description="In Ref. 5; CAA49662." evidence="4" ref="5">
    <location>
        <begin position="57"/>
        <end position="63"/>
    </location>
</feature>
<feature type="sequence conflict" description="In Ref. 4; AAA37516." evidence="4" ref="4">
    <original>A</original>
    <variation>R</variation>
    <location>
        <position position="74"/>
    </location>
</feature>
<proteinExistence type="inferred from homology"/>
<organism>
    <name type="scientific">Mus musculus</name>
    <name type="common">Mouse</name>
    <dbReference type="NCBI Taxonomy" id="10090"/>
    <lineage>
        <taxon>Eukaryota</taxon>
        <taxon>Metazoa</taxon>
        <taxon>Chordata</taxon>
        <taxon>Craniata</taxon>
        <taxon>Vertebrata</taxon>
        <taxon>Euteleostomi</taxon>
        <taxon>Mammalia</taxon>
        <taxon>Eutheria</taxon>
        <taxon>Euarchontoglires</taxon>
        <taxon>Glires</taxon>
        <taxon>Rodentia</taxon>
        <taxon>Myomorpha</taxon>
        <taxon>Muroidea</taxon>
        <taxon>Muridae</taxon>
        <taxon>Murinae</taxon>
        <taxon>Mus</taxon>
        <taxon>Mus</taxon>
    </lineage>
</organism>
<name>CCL7_MOUSE</name>
<dbReference type="EMBL" id="Z12297">
    <property type="protein sequence ID" value="CAA78169.1"/>
    <property type="molecule type" value="mRNA"/>
</dbReference>
<dbReference type="EMBL" id="L04694">
    <property type="protein sequence ID" value="AAA37516.1"/>
    <property type="molecule type" value="mRNA"/>
</dbReference>
<dbReference type="EMBL" id="S71251">
    <property type="protein sequence ID" value="AAB30997.1"/>
    <property type="molecule type" value="mRNA"/>
</dbReference>
<dbReference type="EMBL" id="X70058">
    <property type="protein sequence ID" value="CAA49662.1"/>
    <property type="molecule type" value="Genomic_DNA"/>
</dbReference>
<dbReference type="EMBL" id="AF128193">
    <property type="protein sequence ID" value="AAF22534.1"/>
    <property type="molecule type" value="mRNA"/>
</dbReference>
<dbReference type="EMBL" id="AF128194">
    <property type="protein sequence ID" value="AAF22535.1"/>
    <property type="molecule type" value="mRNA"/>
</dbReference>
<dbReference type="EMBL" id="AK078827">
    <property type="protein sequence ID" value="BAC37413.1"/>
    <property type="molecule type" value="mRNA"/>
</dbReference>
<dbReference type="EMBL" id="BC061126">
    <property type="protein sequence ID" value="AAH61126.1"/>
    <property type="molecule type" value="mRNA"/>
</dbReference>
<dbReference type="CCDS" id="CCDS36245.1"/>
<dbReference type="PIR" id="A48093">
    <property type="entry name" value="A48093"/>
</dbReference>
<dbReference type="RefSeq" id="NP_038682.1">
    <property type="nucleotide sequence ID" value="NM_013654.3"/>
</dbReference>
<dbReference type="SMR" id="Q03366"/>
<dbReference type="BioGRID" id="203131">
    <property type="interactions" value="1"/>
</dbReference>
<dbReference type="FunCoup" id="Q03366">
    <property type="interactions" value="701"/>
</dbReference>
<dbReference type="STRING" id="10090.ENSMUSP00000021011"/>
<dbReference type="GlyCosmos" id="Q03366">
    <property type="glycosylation" value="1 site, No reported glycans"/>
</dbReference>
<dbReference type="GlyGen" id="Q03366">
    <property type="glycosylation" value="1 site"/>
</dbReference>
<dbReference type="PaxDb" id="10090-ENSMUSP00000021011"/>
<dbReference type="PeptideAtlas" id="Q03366"/>
<dbReference type="Antibodypedia" id="15482">
    <property type="antibodies" value="726 antibodies from 35 providers"/>
</dbReference>
<dbReference type="DNASU" id="20306"/>
<dbReference type="Ensembl" id="ENSMUST00000021011.3">
    <property type="protein sequence ID" value="ENSMUSP00000021011.3"/>
    <property type="gene ID" value="ENSMUSG00000035373.3"/>
</dbReference>
<dbReference type="GeneID" id="20306"/>
<dbReference type="KEGG" id="mmu:20306"/>
<dbReference type="UCSC" id="uc007kmq.2">
    <property type="organism name" value="mouse"/>
</dbReference>
<dbReference type="AGR" id="MGI:99512"/>
<dbReference type="CTD" id="6354"/>
<dbReference type="MGI" id="MGI:99512">
    <property type="gene designation" value="Ccl7"/>
</dbReference>
<dbReference type="VEuPathDB" id="HostDB:ENSMUSG00000035373"/>
<dbReference type="eggNOG" id="ENOG502S6ZP">
    <property type="taxonomic scope" value="Eukaryota"/>
</dbReference>
<dbReference type="GeneTree" id="ENSGT01130000278316"/>
<dbReference type="HOGENOM" id="CLU_141716_1_0_1"/>
<dbReference type="InParanoid" id="Q03366"/>
<dbReference type="OMA" id="QKWVQEF"/>
<dbReference type="OrthoDB" id="9404618at2759"/>
<dbReference type="PhylomeDB" id="Q03366"/>
<dbReference type="TreeFam" id="TF334888"/>
<dbReference type="BioGRID-ORCS" id="20306">
    <property type="hits" value="3 hits in 79 CRISPR screens"/>
</dbReference>
<dbReference type="PRO" id="PR:Q03366"/>
<dbReference type="Proteomes" id="UP000000589">
    <property type="component" value="Chromosome 11"/>
</dbReference>
<dbReference type="RNAct" id="Q03366">
    <property type="molecule type" value="protein"/>
</dbReference>
<dbReference type="Bgee" id="ENSMUSG00000035373">
    <property type="expression patterns" value="Expressed in stroma of bone marrow and 84 other cell types or tissues"/>
</dbReference>
<dbReference type="ExpressionAtlas" id="Q03366">
    <property type="expression patterns" value="baseline and differential"/>
</dbReference>
<dbReference type="GO" id="GO:0005615">
    <property type="term" value="C:extracellular space"/>
    <property type="evidence" value="ECO:0000314"/>
    <property type="project" value="MGI"/>
</dbReference>
<dbReference type="GO" id="GO:0031726">
    <property type="term" value="F:CCR1 chemokine receptor binding"/>
    <property type="evidence" value="ECO:0007669"/>
    <property type="project" value="Ensembl"/>
</dbReference>
<dbReference type="GO" id="GO:0031727">
    <property type="term" value="F:CCR2 chemokine receptor binding"/>
    <property type="evidence" value="ECO:0000353"/>
    <property type="project" value="BHF-UCL"/>
</dbReference>
<dbReference type="GO" id="GO:0008009">
    <property type="term" value="F:chemokine activity"/>
    <property type="evidence" value="ECO:0007669"/>
    <property type="project" value="Ensembl"/>
</dbReference>
<dbReference type="GO" id="GO:0008201">
    <property type="term" value="F:heparin binding"/>
    <property type="evidence" value="ECO:0007669"/>
    <property type="project" value="UniProtKB-KW"/>
</dbReference>
<dbReference type="GO" id="GO:0071361">
    <property type="term" value="P:cellular response to ethanol"/>
    <property type="evidence" value="ECO:0007669"/>
    <property type="project" value="Ensembl"/>
</dbReference>
<dbReference type="GO" id="GO:0007010">
    <property type="term" value="P:cytoskeleton organization"/>
    <property type="evidence" value="ECO:0007669"/>
    <property type="project" value="Ensembl"/>
</dbReference>
<dbReference type="GO" id="GO:0048245">
    <property type="term" value="P:eosinophil chemotaxis"/>
    <property type="evidence" value="ECO:0007669"/>
    <property type="project" value="Ensembl"/>
</dbReference>
<dbReference type="GO" id="GO:0006955">
    <property type="term" value="P:immune response"/>
    <property type="evidence" value="ECO:0007669"/>
    <property type="project" value="InterPro"/>
</dbReference>
<dbReference type="GO" id="GO:0006954">
    <property type="term" value="P:inflammatory response"/>
    <property type="evidence" value="ECO:0007669"/>
    <property type="project" value="UniProtKB-KW"/>
</dbReference>
<dbReference type="GO" id="GO:2000503">
    <property type="term" value="P:positive regulation of natural killer cell chemotaxis"/>
    <property type="evidence" value="ECO:0007669"/>
    <property type="project" value="Ensembl"/>
</dbReference>
<dbReference type="GO" id="GO:0008360">
    <property type="term" value="P:regulation of cell shape"/>
    <property type="evidence" value="ECO:0007669"/>
    <property type="project" value="Ensembl"/>
</dbReference>
<dbReference type="GO" id="GO:0010332">
    <property type="term" value="P:response to gamma radiation"/>
    <property type="evidence" value="ECO:0007669"/>
    <property type="project" value="Ensembl"/>
</dbReference>
<dbReference type="CDD" id="cd00272">
    <property type="entry name" value="Chemokine_CC"/>
    <property type="match status" value="1"/>
</dbReference>
<dbReference type="FunFam" id="2.40.50.40:FF:000002">
    <property type="entry name" value="C-C motif chemokine"/>
    <property type="match status" value="1"/>
</dbReference>
<dbReference type="Gene3D" id="2.40.50.40">
    <property type="match status" value="1"/>
</dbReference>
<dbReference type="InterPro" id="IPR039809">
    <property type="entry name" value="Chemokine_b/g/d"/>
</dbReference>
<dbReference type="InterPro" id="IPR000827">
    <property type="entry name" value="Chemokine_CC_CS"/>
</dbReference>
<dbReference type="InterPro" id="IPR001811">
    <property type="entry name" value="Chemokine_IL8-like_dom"/>
</dbReference>
<dbReference type="InterPro" id="IPR036048">
    <property type="entry name" value="Interleukin_8-like_sf"/>
</dbReference>
<dbReference type="PANTHER" id="PTHR12015:SF161">
    <property type="entry name" value="C-C MOTIF CHEMOKINE 7"/>
    <property type="match status" value="1"/>
</dbReference>
<dbReference type="PANTHER" id="PTHR12015">
    <property type="entry name" value="SMALL INDUCIBLE CYTOKINE A"/>
    <property type="match status" value="1"/>
</dbReference>
<dbReference type="Pfam" id="PF00048">
    <property type="entry name" value="IL8"/>
    <property type="match status" value="1"/>
</dbReference>
<dbReference type="SMART" id="SM00199">
    <property type="entry name" value="SCY"/>
    <property type="match status" value="1"/>
</dbReference>
<dbReference type="SUPFAM" id="SSF54117">
    <property type="entry name" value="Interleukin 8-like chemokines"/>
    <property type="match status" value="1"/>
</dbReference>
<dbReference type="PROSITE" id="PS00472">
    <property type="entry name" value="SMALL_CYTOKINES_CC"/>
    <property type="match status" value="1"/>
</dbReference>